<evidence type="ECO:0000255" key="1">
    <source>
        <dbReference type="HAMAP-Rule" id="MF_00835"/>
    </source>
</evidence>
<name>BIOC_PAESJ</name>
<organism>
    <name type="scientific">Paenibacillus sp. (strain JDR-2)</name>
    <dbReference type="NCBI Taxonomy" id="324057"/>
    <lineage>
        <taxon>Bacteria</taxon>
        <taxon>Bacillati</taxon>
        <taxon>Bacillota</taxon>
        <taxon>Bacilli</taxon>
        <taxon>Bacillales</taxon>
        <taxon>Paenibacillaceae</taxon>
        <taxon>Paenibacillus</taxon>
    </lineage>
</organism>
<keyword id="KW-0093">Biotin biosynthesis</keyword>
<keyword id="KW-0489">Methyltransferase</keyword>
<keyword id="KW-0949">S-adenosyl-L-methionine</keyword>
<keyword id="KW-0808">Transferase</keyword>
<sequence>MNNPKTAIQRQFNRSAAGSYDIHADVQRTMAAELAKSIIERNSRGKATEPKILEIGCGTGQFTELLLNQWPHVSITALDLAPAMIHTAEQRFKSRQSANIRFLQADVEIWAVEAPSDSFDLIVSNACFQWLSHPRQTISHLKRFLREGGSLVFTTFGPNTFLELHQAFAEVYHAYGMEPQRHGLSVLSTNQWEEVLAEAGFSTIYCQQDTQKETYASPRDFLRSIKSMGASHSEAIPIDGLSPRKLFNEMYKVYEEKFNMKDGIVATYEWLLIYAG</sequence>
<gene>
    <name evidence="1" type="primary">bioC</name>
    <name type="ordered locus">Pjdr2_1466</name>
</gene>
<comment type="function">
    <text evidence="1">Converts the free carboxyl group of a malonyl-thioester to its methyl ester by transfer of a methyl group from S-adenosyl-L-methionine (SAM). It allows to synthesize pimeloyl-ACP via the fatty acid synthetic pathway.</text>
</comment>
<comment type="catalytic activity">
    <reaction evidence="1">
        <text>malonyl-[ACP] + S-adenosyl-L-methionine = malonyl-[ACP] methyl ester + S-adenosyl-L-homocysteine</text>
        <dbReference type="Rhea" id="RHEA:17105"/>
        <dbReference type="Rhea" id="RHEA-COMP:9623"/>
        <dbReference type="Rhea" id="RHEA-COMP:9954"/>
        <dbReference type="ChEBI" id="CHEBI:57856"/>
        <dbReference type="ChEBI" id="CHEBI:59789"/>
        <dbReference type="ChEBI" id="CHEBI:78449"/>
        <dbReference type="ChEBI" id="CHEBI:78845"/>
        <dbReference type="EC" id="2.1.1.197"/>
    </reaction>
</comment>
<comment type="pathway">
    <text evidence="1">Cofactor biosynthesis; biotin biosynthesis.</text>
</comment>
<comment type="similarity">
    <text evidence="1">Belongs to the methyltransferase superfamily.</text>
</comment>
<reference key="1">
    <citation type="journal article" date="2012" name="Stand. Genomic Sci.">
        <title>Complete genome sequence of Paenibacillus sp. strain JDR-2.</title>
        <authorList>
            <person name="Chow V."/>
            <person name="Nong G."/>
            <person name="St John F.J."/>
            <person name="Rice J.D."/>
            <person name="Dickstein E."/>
            <person name="Chertkov O."/>
            <person name="Bruce D."/>
            <person name="Detter C."/>
            <person name="Brettin T."/>
            <person name="Han J."/>
            <person name="Woyke T."/>
            <person name="Pitluck S."/>
            <person name="Nolan M."/>
            <person name="Pati A."/>
            <person name="Martin J."/>
            <person name="Copeland A."/>
            <person name="Land M.L."/>
            <person name="Goodwin L."/>
            <person name="Jones J.B."/>
            <person name="Ingram L.O."/>
            <person name="Shanmugam K.T."/>
            <person name="Preston J.F."/>
        </authorList>
    </citation>
    <scope>NUCLEOTIDE SEQUENCE [LARGE SCALE GENOMIC DNA]</scope>
    <source>
        <strain>JDR-2</strain>
    </source>
</reference>
<dbReference type="EC" id="2.1.1.197" evidence="1"/>
<dbReference type="EMBL" id="CP001656">
    <property type="protein sequence ID" value="ACT00141.1"/>
    <property type="molecule type" value="Genomic_DNA"/>
</dbReference>
<dbReference type="RefSeq" id="WP_015843086.1">
    <property type="nucleotide sequence ID" value="NC_012914.1"/>
</dbReference>
<dbReference type="SMR" id="C6CWS7"/>
<dbReference type="STRING" id="324057.Pjdr2_1466"/>
<dbReference type="KEGG" id="pjd:Pjdr2_1466"/>
<dbReference type="eggNOG" id="COG4106">
    <property type="taxonomic scope" value="Bacteria"/>
</dbReference>
<dbReference type="HOGENOM" id="CLU_046586_2_3_9"/>
<dbReference type="OrthoDB" id="9760689at2"/>
<dbReference type="UniPathway" id="UPA00078"/>
<dbReference type="GO" id="GO:0010340">
    <property type="term" value="F:carboxyl-O-methyltransferase activity"/>
    <property type="evidence" value="ECO:0007669"/>
    <property type="project" value="UniProtKB-UniRule"/>
</dbReference>
<dbReference type="GO" id="GO:0102130">
    <property type="term" value="F:malonyl-CoA methyltransferase activity"/>
    <property type="evidence" value="ECO:0007669"/>
    <property type="project" value="UniProtKB-EC"/>
</dbReference>
<dbReference type="GO" id="GO:0009102">
    <property type="term" value="P:biotin biosynthetic process"/>
    <property type="evidence" value="ECO:0007669"/>
    <property type="project" value="UniProtKB-UniRule"/>
</dbReference>
<dbReference type="GO" id="GO:0032259">
    <property type="term" value="P:methylation"/>
    <property type="evidence" value="ECO:0007669"/>
    <property type="project" value="UniProtKB-KW"/>
</dbReference>
<dbReference type="CDD" id="cd02440">
    <property type="entry name" value="AdoMet_MTases"/>
    <property type="match status" value="1"/>
</dbReference>
<dbReference type="Gene3D" id="3.40.50.150">
    <property type="entry name" value="Vaccinia Virus protein VP39"/>
    <property type="match status" value="1"/>
</dbReference>
<dbReference type="HAMAP" id="MF_00835">
    <property type="entry name" value="BioC"/>
    <property type="match status" value="1"/>
</dbReference>
<dbReference type="InterPro" id="IPR011814">
    <property type="entry name" value="BioC"/>
</dbReference>
<dbReference type="InterPro" id="IPR029063">
    <property type="entry name" value="SAM-dependent_MTases_sf"/>
</dbReference>
<dbReference type="NCBIfam" id="TIGR02072">
    <property type="entry name" value="BioC"/>
    <property type="match status" value="1"/>
</dbReference>
<dbReference type="PANTHER" id="PTHR43861:SF1">
    <property type="entry name" value="TRANS-ACONITATE 2-METHYLTRANSFERASE"/>
    <property type="match status" value="1"/>
</dbReference>
<dbReference type="PANTHER" id="PTHR43861">
    <property type="entry name" value="TRANS-ACONITATE 2-METHYLTRANSFERASE-RELATED"/>
    <property type="match status" value="1"/>
</dbReference>
<dbReference type="Pfam" id="PF13489">
    <property type="entry name" value="Methyltransf_23"/>
    <property type="match status" value="1"/>
</dbReference>
<dbReference type="SUPFAM" id="SSF53335">
    <property type="entry name" value="S-adenosyl-L-methionine-dependent methyltransferases"/>
    <property type="match status" value="1"/>
</dbReference>
<protein>
    <recommendedName>
        <fullName evidence="1">Malonyl-[acyl-carrier protein] O-methyltransferase</fullName>
        <shortName evidence="1">Malonyl-ACP O-methyltransferase</shortName>
        <ecNumber evidence="1">2.1.1.197</ecNumber>
    </recommendedName>
    <alternativeName>
        <fullName evidence="1">Biotin synthesis protein BioC</fullName>
    </alternativeName>
</protein>
<accession>C6CWS7</accession>
<feature type="chain" id="PRO_0000412515" description="Malonyl-[acyl-carrier protein] O-methyltransferase">
    <location>
        <begin position="1"/>
        <end position="276"/>
    </location>
</feature>
<proteinExistence type="inferred from homology"/>